<name>PAP1_HELVI</name>
<sequence>ENFSGGCIPGYMRTADGRCKPTY</sequence>
<protein>
    <recommendedName>
        <fullName>Paralytic peptide 1</fullName>
    </recommendedName>
    <alternativeName>
        <fullName>Paralytic peptide I</fullName>
        <shortName>PP I</shortName>
    </alternativeName>
</protein>
<keyword id="KW-0202">Cytokine</keyword>
<keyword id="KW-0903">Direct protein sequencing</keyword>
<keyword id="KW-1015">Disulfide bond</keyword>
<reference key="1">
    <citation type="journal article" date="1991" name="J. Biol. Chem.">
        <title>Isolation and identification of paralytic peptides from hemolymph of the lepidopteran insects Manduca sexta, Spodoptera exigua, and Heliothis virescens.</title>
        <authorList>
            <person name="Skinner W.S."/>
            <person name="Dennis P.A."/>
            <person name="Li J.P."/>
            <person name="Summerfelt R.M."/>
            <person name="Carney R.L."/>
            <person name="Quistad G.B."/>
        </authorList>
    </citation>
    <scope>PROTEIN SEQUENCE</scope>
    <source>
        <tissue>Hemolymph</tissue>
    </source>
</reference>
<evidence type="ECO:0000250" key="1"/>
<evidence type="ECO:0000305" key="2"/>
<accession>P30251</accession>
<proteinExistence type="evidence at protein level"/>
<dbReference type="PIR" id="F39855">
    <property type="entry name" value="F39855"/>
</dbReference>
<dbReference type="GO" id="GO:0005615">
    <property type="term" value="C:extracellular space"/>
    <property type="evidence" value="ECO:0007669"/>
    <property type="project" value="UniProtKB-KW"/>
</dbReference>
<dbReference type="GO" id="GO:0005125">
    <property type="term" value="F:cytokine activity"/>
    <property type="evidence" value="ECO:0007669"/>
    <property type="project" value="UniProtKB-KW"/>
</dbReference>
<dbReference type="InterPro" id="IPR003463">
    <property type="entry name" value="GBP_PSP"/>
</dbReference>
<dbReference type="Pfam" id="PF02425">
    <property type="entry name" value="GBP_PSP"/>
    <property type="match status" value="1"/>
</dbReference>
<organism>
    <name type="scientific">Heliothis virescens</name>
    <name type="common">Tobacco budworm moth</name>
    <dbReference type="NCBI Taxonomy" id="7102"/>
    <lineage>
        <taxon>Eukaryota</taxon>
        <taxon>Metazoa</taxon>
        <taxon>Ecdysozoa</taxon>
        <taxon>Arthropoda</taxon>
        <taxon>Hexapoda</taxon>
        <taxon>Insecta</taxon>
        <taxon>Pterygota</taxon>
        <taxon>Neoptera</taxon>
        <taxon>Endopterygota</taxon>
        <taxon>Lepidoptera</taxon>
        <taxon>Glossata</taxon>
        <taxon>Ditrysia</taxon>
        <taxon>Noctuoidea</taxon>
        <taxon>Noctuidae</taxon>
        <taxon>Heliothinae</taxon>
        <taxon>Heliothis</taxon>
    </lineage>
</organism>
<feature type="peptide" id="PRO_0000043909" description="Paralytic peptide 1">
    <location>
        <begin position="1"/>
        <end position="23"/>
    </location>
</feature>
<feature type="disulfide bond" evidence="1">
    <location>
        <begin position="7"/>
        <end position="19"/>
    </location>
</feature>
<comment type="function">
    <text>Causes rapid, rigid paralysis when injected into Lepidopteran larvae. The physiological role may be to reduce hemolymph loss following injury and promote wound healing.</text>
</comment>
<comment type="tissue specificity">
    <text>Hemolymph.</text>
</comment>
<comment type="similarity">
    <text evidence="2">Belongs to the GBP/PSP1/paralytic peptide family.</text>
</comment>